<comment type="function">
    <text evidence="1">One of several proteins that assist in the late maturation steps of the functional core of the 30S ribosomal subunit. Associates with free 30S ribosomal subunits (but not with 30S subunits that are part of 70S ribosomes or polysomes). Required for efficient processing of 16S rRNA. May interact with the 5'-terminal helix region of 16S rRNA.</text>
</comment>
<comment type="subunit">
    <text evidence="1">Monomer. Binds 30S ribosomal subunits, but not 50S ribosomal subunits or 70S ribosomes.</text>
</comment>
<comment type="subcellular location">
    <subcellularLocation>
        <location evidence="1">Cytoplasm</location>
    </subcellularLocation>
</comment>
<comment type="similarity">
    <text evidence="1">Belongs to the RbfA family.</text>
</comment>
<organism>
    <name type="scientific">Bacillus cereus (strain ZK / E33L)</name>
    <dbReference type="NCBI Taxonomy" id="288681"/>
    <lineage>
        <taxon>Bacteria</taxon>
        <taxon>Bacillati</taxon>
        <taxon>Bacillota</taxon>
        <taxon>Bacilli</taxon>
        <taxon>Bacillales</taxon>
        <taxon>Bacillaceae</taxon>
        <taxon>Bacillus</taxon>
        <taxon>Bacillus cereus group</taxon>
    </lineage>
</organism>
<accession>Q636L5</accession>
<evidence type="ECO:0000255" key="1">
    <source>
        <dbReference type="HAMAP-Rule" id="MF_00003"/>
    </source>
</evidence>
<sequence>MKLRANRVGEQMKKELGDIISRKIKDPRVGFVTVTDVQVSGDLQIATVYISVLGDEEQKENTLKGLAKAKGFIRSEIGQRIRLRKTPEISFEFDESIGYGHRIDTLLHQINKDGKREE</sequence>
<protein>
    <recommendedName>
        <fullName evidence="1">Ribosome-binding factor A</fullName>
    </recommendedName>
</protein>
<reference key="1">
    <citation type="journal article" date="2006" name="J. Bacteriol.">
        <title>Pathogenomic sequence analysis of Bacillus cereus and Bacillus thuringiensis isolates closely related to Bacillus anthracis.</title>
        <authorList>
            <person name="Han C.S."/>
            <person name="Xie G."/>
            <person name="Challacombe J.F."/>
            <person name="Altherr M.R."/>
            <person name="Bhotika S.S."/>
            <person name="Bruce D."/>
            <person name="Campbell C.S."/>
            <person name="Campbell M.L."/>
            <person name="Chen J."/>
            <person name="Chertkov O."/>
            <person name="Cleland C."/>
            <person name="Dimitrijevic M."/>
            <person name="Doggett N.A."/>
            <person name="Fawcett J.J."/>
            <person name="Glavina T."/>
            <person name="Goodwin L.A."/>
            <person name="Hill K.K."/>
            <person name="Hitchcock P."/>
            <person name="Jackson P.J."/>
            <person name="Keim P."/>
            <person name="Kewalramani A.R."/>
            <person name="Longmire J."/>
            <person name="Lucas S."/>
            <person name="Malfatti S."/>
            <person name="McMurry K."/>
            <person name="Meincke L.J."/>
            <person name="Misra M."/>
            <person name="Moseman B.L."/>
            <person name="Mundt M."/>
            <person name="Munk A.C."/>
            <person name="Okinaka R.T."/>
            <person name="Parson-Quintana B."/>
            <person name="Reilly L.P."/>
            <person name="Richardson P."/>
            <person name="Robinson D.L."/>
            <person name="Rubin E."/>
            <person name="Saunders E."/>
            <person name="Tapia R."/>
            <person name="Tesmer J.G."/>
            <person name="Thayer N."/>
            <person name="Thompson L.S."/>
            <person name="Tice H."/>
            <person name="Ticknor L.O."/>
            <person name="Wills P.L."/>
            <person name="Brettin T.S."/>
            <person name="Gilna P."/>
        </authorList>
    </citation>
    <scope>NUCLEOTIDE SEQUENCE [LARGE SCALE GENOMIC DNA]</scope>
    <source>
        <strain>ZK / E33L</strain>
    </source>
</reference>
<keyword id="KW-0963">Cytoplasm</keyword>
<keyword id="KW-0690">Ribosome biogenesis</keyword>
<name>RBFA_BACCZ</name>
<feature type="chain" id="PRO_0000102616" description="Ribosome-binding factor A">
    <location>
        <begin position="1"/>
        <end position="118"/>
    </location>
</feature>
<dbReference type="EMBL" id="CP000001">
    <property type="protein sequence ID" value="AAU16697.1"/>
    <property type="molecule type" value="Genomic_DNA"/>
</dbReference>
<dbReference type="RefSeq" id="WP_000776442.1">
    <property type="nucleotide sequence ID" value="NZ_CP009968.1"/>
</dbReference>
<dbReference type="SMR" id="Q636L5"/>
<dbReference type="KEGG" id="bcz:BCE33L3570"/>
<dbReference type="PATRIC" id="fig|288681.22.peg.1841"/>
<dbReference type="Proteomes" id="UP000002612">
    <property type="component" value="Chromosome"/>
</dbReference>
<dbReference type="GO" id="GO:0005829">
    <property type="term" value="C:cytosol"/>
    <property type="evidence" value="ECO:0007669"/>
    <property type="project" value="TreeGrafter"/>
</dbReference>
<dbReference type="GO" id="GO:0043024">
    <property type="term" value="F:ribosomal small subunit binding"/>
    <property type="evidence" value="ECO:0007669"/>
    <property type="project" value="TreeGrafter"/>
</dbReference>
<dbReference type="GO" id="GO:0030490">
    <property type="term" value="P:maturation of SSU-rRNA"/>
    <property type="evidence" value="ECO:0007669"/>
    <property type="project" value="UniProtKB-UniRule"/>
</dbReference>
<dbReference type="FunFam" id="3.30.300.20:FF:000009">
    <property type="entry name" value="Ribosome-binding factor A"/>
    <property type="match status" value="1"/>
</dbReference>
<dbReference type="Gene3D" id="3.30.300.20">
    <property type="match status" value="1"/>
</dbReference>
<dbReference type="HAMAP" id="MF_00003">
    <property type="entry name" value="RbfA"/>
    <property type="match status" value="1"/>
</dbReference>
<dbReference type="InterPro" id="IPR015946">
    <property type="entry name" value="KH_dom-like_a/b"/>
</dbReference>
<dbReference type="InterPro" id="IPR000238">
    <property type="entry name" value="RbfA"/>
</dbReference>
<dbReference type="InterPro" id="IPR023799">
    <property type="entry name" value="RbfA_dom_sf"/>
</dbReference>
<dbReference type="InterPro" id="IPR020053">
    <property type="entry name" value="Ribosome-bd_factorA_CS"/>
</dbReference>
<dbReference type="NCBIfam" id="TIGR00082">
    <property type="entry name" value="rbfA"/>
    <property type="match status" value="1"/>
</dbReference>
<dbReference type="PANTHER" id="PTHR33515">
    <property type="entry name" value="RIBOSOME-BINDING FACTOR A, CHLOROPLASTIC-RELATED"/>
    <property type="match status" value="1"/>
</dbReference>
<dbReference type="PANTHER" id="PTHR33515:SF1">
    <property type="entry name" value="RIBOSOME-BINDING FACTOR A, CHLOROPLASTIC-RELATED"/>
    <property type="match status" value="1"/>
</dbReference>
<dbReference type="Pfam" id="PF02033">
    <property type="entry name" value="RBFA"/>
    <property type="match status" value="1"/>
</dbReference>
<dbReference type="SUPFAM" id="SSF89919">
    <property type="entry name" value="Ribosome-binding factor A, RbfA"/>
    <property type="match status" value="1"/>
</dbReference>
<dbReference type="PROSITE" id="PS01319">
    <property type="entry name" value="RBFA"/>
    <property type="match status" value="1"/>
</dbReference>
<proteinExistence type="inferred from homology"/>
<gene>
    <name evidence="1" type="primary">rbfA</name>
    <name type="ordered locus">BCE33L3570</name>
</gene>